<reference key="1">
    <citation type="journal article" date="2002" name="NeuroReport">
        <title>Identification of addicsin/GTRAP3-18 as a chronic morphine-augumented gene in amygdala.</title>
        <authorList>
            <person name="Ikemoto M.J."/>
            <person name="Inoue K."/>
            <person name="Akiduki S."/>
            <person name="Osugi T."/>
            <person name="Imamura T."/>
            <person name="Ishida N."/>
            <person name="Ohtomi M."/>
        </authorList>
    </citation>
    <scope>NUCLEOTIDE SEQUENCE [MRNA]</scope>
</reference>
<reference key="2">
    <citation type="journal article" date="2005" name="FEBS Lett.">
        <title>JM4 is a four-transmembrane protein binding to the CCR5 receptor.</title>
        <authorList>
            <person name="Schweneker M."/>
            <person name="Bachmann A.S."/>
            <person name="Moelling K."/>
        </authorList>
    </citation>
    <scope>NUCLEOTIDE SEQUENCE [MRNA]</scope>
    <source>
        <tissue>Neuroblastoma</tissue>
    </source>
</reference>
<reference key="3">
    <citation type="submission" date="1998-05" db="EMBL/GenBank/DDBJ databases">
        <title>Molecular cloning of a dermal papilla derived gene.</title>
        <authorList>
            <person name="Ikeda A."/>
            <person name="Yoshimoto M."/>
        </authorList>
    </citation>
    <scope>NUCLEOTIDE SEQUENCE [MRNA]</scope>
    <source>
        <tissue>Hair follicle dermal papilla</tissue>
    </source>
</reference>
<reference key="4">
    <citation type="submission" date="1998-06" db="EMBL/GenBank/DDBJ databases">
        <title>A novel differentially displayed vitamin A responsive gene that is cytoskeleton related.</title>
        <authorList>
            <person name="Zhou J.W."/>
            <person name="Di Y.P."/>
            <person name="Wu R."/>
        </authorList>
    </citation>
    <scope>NUCLEOTIDE SEQUENCE [MRNA]</scope>
</reference>
<reference key="5">
    <citation type="submission" date="1998-12" db="EMBL/GenBank/DDBJ databases">
        <title>Cloning of a novel human cDNA homologous to human mRNA for JM4 protein.</title>
        <authorList>
            <person name="Zhang X.N."/>
            <person name="Yu L."/>
            <person name="Jin L."/>
            <person name="Hu P.R."/>
            <person name="Chen S.Y."/>
            <person name="Zhao S.Y."/>
        </authorList>
    </citation>
    <scope>NUCLEOTIDE SEQUENCE [MRNA]</scope>
</reference>
<reference key="6">
    <citation type="submission" date="1999-02" db="EMBL/GenBank/DDBJ databases">
        <title>A novel gene expressed in the human adrenal gland.</title>
        <authorList>
            <person name="Jiang C."/>
            <person name="Huang C."/>
            <person name="Wu T."/>
            <person name="Peng Y."/>
            <person name="Gu Y."/>
            <person name="Zhang L."/>
            <person name="Zhang C."/>
            <person name="Li Y."/>
            <person name="Han Z."/>
            <person name="Wang Y."/>
            <person name="Chen Z."/>
            <person name="Fu G."/>
        </authorList>
    </citation>
    <scope>NUCLEOTIDE SEQUENCE [MRNA]</scope>
    <source>
        <tissue>Adrenal gland</tissue>
    </source>
</reference>
<reference key="7">
    <citation type="journal article" date="2000" name="Genome Res.">
        <title>Cloning and functional analysis of cDNAs with open reading frames for 300 previously undefined genes expressed in CD34+ hematopoietic stem/progenitor cells.</title>
        <authorList>
            <person name="Zhang Q.-H."/>
            <person name="Ye M."/>
            <person name="Wu X.-Y."/>
            <person name="Ren S.-X."/>
            <person name="Zhao M."/>
            <person name="Zhao C.-J."/>
            <person name="Fu G."/>
            <person name="Shen Y."/>
            <person name="Fan H.-Y."/>
            <person name="Lu G."/>
            <person name="Zhong M."/>
            <person name="Xu X.-R."/>
            <person name="Han Z.-G."/>
            <person name="Zhang J.-W."/>
            <person name="Tao J."/>
            <person name="Huang Q.-H."/>
            <person name="Zhou J."/>
            <person name="Hu G.-X."/>
            <person name="Gu J."/>
            <person name="Chen S.-J."/>
            <person name="Chen Z."/>
        </authorList>
    </citation>
    <scope>NUCLEOTIDE SEQUENCE [LARGE SCALE MRNA]</scope>
    <source>
        <tissue>Umbilical cord blood</tissue>
    </source>
</reference>
<reference key="8">
    <citation type="journal article" date="2003" name="Oncogene">
        <title>Large-scale identification and characterization of human genes that activate NF-kappaB and MAPK signaling pathways.</title>
        <authorList>
            <person name="Matsuda A."/>
            <person name="Suzuki Y."/>
            <person name="Honda G."/>
            <person name="Muramatsu S."/>
            <person name="Matsuzaki O."/>
            <person name="Nagano Y."/>
            <person name="Doi T."/>
            <person name="Shimotohno K."/>
            <person name="Harada T."/>
            <person name="Nishida E."/>
            <person name="Hayashi H."/>
            <person name="Sugano S."/>
        </authorList>
    </citation>
    <scope>NUCLEOTIDE SEQUENCE [LARGE SCALE MRNA]</scope>
    <source>
        <tissue>Lung fibroblast</tissue>
    </source>
</reference>
<reference key="9">
    <citation type="journal article" date="2004" name="Nat. Genet.">
        <title>Complete sequencing and characterization of 21,243 full-length human cDNAs.</title>
        <authorList>
            <person name="Ota T."/>
            <person name="Suzuki Y."/>
            <person name="Nishikawa T."/>
            <person name="Otsuki T."/>
            <person name="Sugiyama T."/>
            <person name="Irie R."/>
            <person name="Wakamatsu A."/>
            <person name="Hayashi K."/>
            <person name="Sato H."/>
            <person name="Nagai K."/>
            <person name="Kimura K."/>
            <person name="Makita H."/>
            <person name="Sekine M."/>
            <person name="Obayashi M."/>
            <person name="Nishi T."/>
            <person name="Shibahara T."/>
            <person name="Tanaka T."/>
            <person name="Ishii S."/>
            <person name="Yamamoto J."/>
            <person name="Saito K."/>
            <person name="Kawai Y."/>
            <person name="Isono Y."/>
            <person name="Nakamura Y."/>
            <person name="Nagahari K."/>
            <person name="Murakami K."/>
            <person name="Yasuda T."/>
            <person name="Iwayanagi T."/>
            <person name="Wagatsuma M."/>
            <person name="Shiratori A."/>
            <person name="Sudo H."/>
            <person name="Hosoiri T."/>
            <person name="Kaku Y."/>
            <person name="Kodaira H."/>
            <person name="Kondo H."/>
            <person name="Sugawara M."/>
            <person name="Takahashi M."/>
            <person name="Kanda K."/>
            <person name="Yokoi T."/>
            <person name="Furuya T."/>
            <person name="Kikkawa E."/>
            <person name="Omura Y."/>
            <person name="Abe K."/>
            <person name="Kamihara K."/>
            <person name="Katsuta N."/>
            <person name="Sato K."/>
            <person name="Tanikawa M."/>
            <person name="Yamazaki M."/>
            <person name="Ninomiya K."/>
            <person name="Ishibashi T."/>
            <person name="Yamashita H."/>
            <person name="Murakawa K."/>
            <person name="Fujimori K."/>
            <person name="Tanai H."/>
            <person name="Kimata M."/>
            <person name="Watanabe M."/>
            <person name="Hiraoka S."/>
            <person name="Chiba Y."/>
            <person name="Ishida S."/>
            <person name="Ono Y."/>
            <person name="Takiguchi S."/>
            <person name="Watanabe S."/>
            <person name="Yosida M."/>
            <person name="Hotuta T."/>
            <person name="Kusano J."/>
            <person name="Kanehori K."/>
            <person name="Takahashi-Fujii A."/>
            <person name="Hara H."/>
            <person name="Tanase T.-O."/>
            <person name="Nomura Y."/>
            <person name="Togiya S."/>
            <person name="Komai F."/>
            <person name="Hara R."/>
            <person name="Takeuchi K."/>
            <person name="Arita M."/>
            <person name="Imose N."/>
            <person name="Musashino K."/>
            <person name="Yuuki H."/>
            <person name="Oshima A."/>
            <person name="Sasaki N."/>
            <person name="Aotsuka S."/>
            <person name="Yoshikawa Y."/>
            <person name="Matsunawa H."/>
            <person name="Ichihara T."/>
            <person name="Shiohata N."/>
            <person name="Sano S."/>
            <person name="Moriya S."/>
            <person name="Momiyama H."/>
            <person name="Satoh N."/>
            <person name="Takami S."/>
            <person name="Terashima Y."/>
            <person name="Suzuki O."/>
            <person name="Nakagawa S."/>
            <person name="Senoh A."/>
            <person name="Mizoguchi H."/>
            <person name="Goto Y."/>
            <person name="Shimizu F."/>
            <person name="Wakebe H."/>
            <person name="Hishigaki H."/>
            <person name="Watanabe T."/>
            <person name="Sugiyama A."/>
            <person name="Takemoto M."/>
            <person name="Kawakami B."/>
            <person name="Yamazaki M."/>
            <person name="Watanabe K."/>
            <person name="Kumagai A."/>
            <person name="Itakura S."/>
            <person name="Fukuzumi Y."/>
            <person name="Fujimori Y."/>
            <person name="Komiyama M."/>
            <person name="Tashiro H."/>
            <person name="Tanigami A."/>
            <person name="Fujiwara T."/>
            <person name="Ono T."/>
            <person name="Yamada K."/>
            <person name="Fujii Y."/>
            <person name="Ozaki K."/>
            <person name="Hirao M."/>
            <person name="Ohmori Y."/>
            <person name="Kawabata A."/>
            <person name="Hikiji T."/>
            <person name="Kobatake N."/>
            <person name="Inagaki H."/>
            <person name="Ikema Y."/>
            <person name="Okamoto S."/>
            <person name="Okitani R."/>
            <person name="Kawakami T."/>
            <person name="Noguchi S."/>
            <person name="Itoh T."/>
            <person name="Shigeta K."/>
            <person name="Senba T."/>
            <person name="Matsumura K."/>
            <person name="Nakajima Y."/>
            <person name="Mizuno T."/>
            <person name="Morinaga M."/>
            <person name="Sasaki M."/>
            <person name="Togashi T."/>
            <person name="Oyama M."/>
            <person name="Hata H."/>
            <person name="Watanabe M."/>
            <person name="Komatsu T."/>
            <person name="Mizushima-Sugano J."/>
            <person name="Satoh T."/>
            <person name="Shirai Y."/>
            <person name="Takahashi Y."/>
            <person name="Nakagawa K."/>
            <person name="Okumura K."/>
            <person name="Nagase T."/>
            <person name="Nomura N."/>
            <person name="Kikuchi H."/>
            <person name="Masuho Y."/>
            <person name="Yamashita R."/>
            <person name="Nakai K."/>
            <person name="Yada T."/>
            <person name="Nakamura Y."/>
            <person name="Ohara O."/>
            <person name="Isogai T."/>
            <person name="Sugano S."/>
        </authorList>
    </citation>
    <scope>NUCLEOTIDE SEQUENCE [LARGE SCALE MRNA]</scope>
</reference>
<reference key="10">
    <citation type="submission" date="2005-04" db="EMBL/GenBank/DDBJ databases">
        <authorList>
            <person name="Totoki Y."/>
            <person name="Toyoda A."/>
            <person name="Takeda T."/>
            <person name="Sakaki Y."/>
            <person name="Tanaka A."/>
            <person name="Yokoyama S."/>
        </authorList>
    </citation>
    <scope>NUCLEOTIDE SEQUENCE [LARGE SCALE MRNA]</scope>
    <source>
        <tissue>Spleen</tissue>
    </source>
</reference>
<reference key="11">
    <citation type="submission" date="2005-07" db="EMBL/GenBank/DDBJ databases">
        <authorList>
            <person name="Mural R.J."/>
            <person name="Istrail S."/>
            <person name="Sutton G.G."/>
            <person name="Florea L."/>
            <person name="Halpern A.L."/>
            <person name="Mobarry C.M."/>
            <person name="Lippert R."/>
            <person name="Walenz B."/>
            <person name="Shatkay H."/>
            <person name="Dew I."/>
            <person name="Miller J.R."/>
            <person name="Flanigan M.J."/>
            <person name="Edwards N.J."/>
            <person name="Bolanos R."/>
            <person name="Fasulo D."/>
            <person name="Halldorsson B.V."/>
            <person name="Hannenhalli S."/>
            <person name="Turner R."/>
            <person name="Yooseph S."/>
            <person name="Lu F."/>
            <person name="Nusskern D.R."/>
            <person name="Shue B.C."/>
            <person name="Zheng X.H."/>
            <person name="Zhong F."/>
            <person name="Delcher A.L."/>
            <person name="Huson D.H."/>
            <person name="Kravitz S.A."/>
            <person name="Mouchard L."/>
            <person name="Reinert K."/>
            <person name="Remington K.A."/>
            <person name="Clark A.G."/>
            <person name="Waterman M.S."/>
            <person name="Eichler E.E."/>
            <person name="Adams M.D."/>
            <person name="Hunkapiller M.W."/>
            <person name="Myers E.W."/>
            <person name="Venter J.C."/>
        </authorList>
    </citation>
    <scope>NUCLEOTIDE SEQUENCE [LARGE SCALE GENOMIC DNA]</scope>
</reference>
<reference key="12">
    <citation type="journal article" date="2004" name="Genome Res.">
        <title>The status, quality, and expansion of the NIH full-length cDNA project: the Mammalian Gene Collection (MGC).</title>
        <authorList>
            <consortium name="The MGC Project Team"/>
        </authorList>
    </citation>
    <scope>NUCLEOTIDE SEQUENCE [LARGE SCALE MRNA]</scope>
    <source>
        <tissue>Bone marrow</tissue>
        <tissue>Brain</tissue>
    </source>
</reference>
<reference key="13">
    <citation type="journal article" date="2003" name="Nat. Biotechnol.">
        <title>Exploring proteomes and analyzing protein processing by mass spectrometric identification of sorted N-terminal peptides.</title>
        <authorList>
            <person name="Gevaert K."/>
            <person name="Goethals M."/>
            <person name="Martens L."/>
            <person name="Van Damme J."/>
            <person name="Staes A."/>
            <person name="Thomas G.R."/>
            <person name="Vandekerckhove J."/>
        </authorList>
    </citation>
    <scope>PROTEIN SEQUENCE OF 1-9</scope>
    <scope>ACETYLATION AT MET-1</scope>
    <source>
        <tissue>Platelet</tissue>
    </source>
</reference>
<reference key="14">
    <citation type="submission" date="2005-11" db="UniProtKB">
        <authorList>
            <person name="Bienvenut W.V."/>
            <person name="Claeys D."/>
        </authorList>
    </citation>
    <scope>PROTEIN SEQUENCE OF 1-27; 152-158 AND 160-185</scope>
    <scope>ACETYLATION AT MET-1</scope>
    <scope>IDENTIFICATION BY MASS SPECTROMETRY</scope>
    <source>
        <tissue>Platelet</tissue>
    </source>
</reference>
<reference key="15">
    <citation type="journal article" date="2003" name="Zhonghua Lao Dong Wei Sheng Zhi Ye Bing Za Zhi">
        <title>Effect of differentiation inducer and heat stress on the expression of JWA protein and Hsp70 of K562 cells.</title>
        <authorList>
            <person name="Mao W.G."/>
            <person name="Li A.P."/>
            <person name="Ye J."/>
            <person name="Huang S."/>
            <person name="Li A.Q."/>
            <person name="Zhou J.W."/>
        </authorList>
    </citation>
    <scope>INDUCTION</scope>
</reference>
<reference key="16">
    <citation type="journal article" date="2006" name="Gene">
        <title>Genomic organization, expression profile, and characterization of the new protein PRA1 domain family, member 2 (PRAF2).</title>
        <authorList>
            <person name="Fo C.S."/>
            <person name="Coleman C.S."/>
            <person name="Wallick C.J."/>
            <person name="Vine A.L."/>
            <person name="Bachmann A.S."/>
        </authorList>
    </citation>
    <scope>NOMENCLATURE</scope>
</reference>
<reference key="17">
    <citation type="journal article" date="2011" name="BMC Syst. Biol.">
        <title>Initial characterization of the human central proteome.</title>
        <authorList>
            <person name="Burkard T.R."/>
            <person name="Planyavsky M."/>
            <person name="Kaupe I."/>
            <person name="Breitwieser F.P."/>
            <person name="Buerckstuemmer T."/>
            <person name="Bennett K.L."/>
            <person name="Superti-Furga G."/>
            <person name="Colinge J."/>
        </authorList>
    </citation>
    <scope>IDENTIFICATION BY MASS SPECTROMETRY [LARGE SCALE ANALYSIS]</scope>
</reference>
<reference key="18">
    <citation type="journal article" date="2012" name="Mol. Cell. Proteomics">
        <title>Comparative large-scale characterisation of plant vs. mammal proteins reveals similar and idiosyncratic N-alpha acetylation features.</title>
        <authorList>
            <person name="Bienvenut W.V."/>
            <person name="Sumpton D."/>
            <person name="Martinez A."/>
            <person name="Lilla S."/>
            <person name="Espagne C."/>
            <person name="Meinnel T."/>
            <person name="Giglione C."/>
        </authorList>
    </citation>
    <scope>ACETYLATION [LARGE SCALE ANALYSIS] AT MET-1</scope>
    <scope>IDENTIFICATION BY MASS SPECTROMETRY [LARGE SCALE ANALYSIS]</scope>
</reference>
<reference key="19">
    <citation type="journal article" date="2012" name="Proc. Natl. Acad. Sci. U.S.A.">
        <title>N-terminal acetylome analyses and functional insights of the N-terminal acetyltransferase NatB.</title>
        <authorList>
            <person name="Van Damme P."/>
            <person name="Lasa M."/>
            <person name="Polevoda B."/>
            <person name="Gazquez C."/>
            <person name="Elosegui-Artola A."/>
            <person name="Kim D.S."/>
            <person name="De Juan-Pardo E."/>
            <person name="Demeyer K."/>
            <person name="Hole K."/>
            <person name="Larrea E."/>
            <person name="Timmerman E."/>
            <person name="Prieto J."/>
            <person name="Arnesen T."/>
            <person name="Sherman F."/>
            <person name="Gevaert K."/>
            <person name="Aldabe R."/>
        </authorList>
    </citation>
    <scope>ACETYLATION [LARGE SCALE ANALYSIS] AT MET-1</scope>
    <scope>IDENTIFICATION BY MASS SPECTROMETRY [LARGE SCALE ANALYSIS]</scope>
</reference>
<reference key="20">
    <citation type="journal article" date="2014" name="J. Proteomics">
        <title>An enzyme assisted RP-RPLC approach for in-depth analysis of human liver phosphoproteome.</title>
        <authorList>
            <person name="Bian Y."/>
            <person name="Song C."/>
            <person name="Cheng K."/>
            <person name="Dong M."/>
            <person name="Wang F."/>
            <person name="Huang J."/>
            <person name="Sun D."/>
            <person name="Wang L."/>
            <person name="Ye M."/>
            <person name="Zou H."/>
        </authorList>
    </citation>
    <scope>IDENTIFICATION BY MASS SPECTROMETRY [LARGE SCALE ANALYSIS]</scope>
    <source>
        <tissue>Liver</tissue>
    </source>
</reference>
<reference key="21">
    <citation type="journal article" date="2015" name="Proteomics">
        <title>N-terminome analysis of the human mitochondrial proteome.</title>
        <authorList>
            <person name="Vaca Jacome A.S."/>
            <person name="Rabilloud T."/>
            <person name="Schaeffer-Reiss C."/>
            <person name="Rompais M."/>
            <person name="Ayoub D."/>
            <person name="Lane L."/>
            <person name="Bairoch A."/>
            <person name="Van Dorsselaer A."/>
            <person name="Carapito C."/>
        </authorList>
    </citation>
    <scope>IDENTIFICATION BY MASS SPECTROMETRY [LARGE SCALE ANALYSIS]</scope>
</reference>
<feature type="chain" id="PRO_0000220883" description="PRA1 family protein 3">
    <location>
        <begin position="1"/>
        <end position="188"/>
    </location>
</feature>
<feature type="topological domain" description="Cytoplasmic" evidence="1">
    <location>
        <begin position="1"/>
        <end position="35"/>
    </location>
</feature>
<feature type="transmembrane region" description="Helical" evidence="4">
    <location>
        <begin position="36"/>
        <end position="56"/>
    </location>
</feature>
<feature type="transmembrane region" description="Helical" evidence="4">
    <location>
        <begin position="57"/>
        <end position="77"/>
    </location>
</feature>
<feature type="topological domain" description="Cytoplasmic" evidence="1">
    <location>
        <begin position="78"/>
        <end position="93"/>
    </location>
</feature>
<feature type="transmembrane region" description="Helical" evidence="4">
    <location>
        <begin position="94"/>
        <end position="114"/>
    </location>
</feature>
<feature type="transmembrane region" description="Helical" evidence="4">
    <location>
        <begin position="115"/>
        <end position="135"/>
    </location>
</feature>
<feature type="topological domain" description="Cytoplasmic" evidence="1">
    <location>
        <begin position="136"/>
        <end position="188"/>
    </location>
</feature>
<feature type="region of interest" description="Required for homodimer formation and heterodimer formation with ARL6IP1" evidence="2">
    <location>
        <begin position="103"/>
        <end position="117"/>
    </location>
</feature>
<feature type="region of interest" description="Targeting to endoplasmic reticulum membrane" evidence="3">
    <location>
        <begin position="136"/>
        <end position="188"/>
    </location>
</feature>
<feature type="modified residue" description="N-acetylmethionine" evidence="5 7 9 10">
    <location>
        <position position="1"/>
    </location>
</feature>
<feature type="sequence conflict" description="In Ref. 10; BAD97286." evidence="8" ref="10">
    <original>D</original>
    <variation>G</variation>
    <location>
        <position position="28"/>
    </location>
</feature>
<protein>
    <recommendedName>
        <fullName>PRA1 family protein 3</fullName>
    </recommendedName>
    <alternativeName>
        <fullName>ADP-ribosylation factor-like protein 6-interacting protein 5</fullName>
        <shortName>ARL-6-interacting protein 5</shortName>
        <shortName>Aip-5</shortName>
    </alternativeName>
    <alternativeName>
        <fullName>Cytoskeleton-related vitamin A-responsive protein</fullName>
    </alternativeName>
    <alternativeName>
        <fullName>Dermal papilla-derived protein 11</fullName>
    </alternativeName>
    <alternativeName>
        <fullName>GTRAP3-18</fullName>
    </alternativeName>
    <alternativeName>
        <fullName>Glutamate transporter EAAC1-interacting protein</fullName>
    </alternativeName>
    <alternativeName>
        <fullName>JM5</fullName>
    </alternativeName>
    <alternativeName>
        <fullName>Prenylated Rab acceptor protein 2</fullName>
    </alternativeName>
    <alternativeName>
        <fullName>Protein JWa</fullName>
    </alternativeName>
    <alternativeName>
        <fullName>Putative MAPK-activating protein PM27</fullName>
    </alternativeName>
</protein>
<sequence>MDVNIAPLRAWDDFFPGSDRFARPDFRDISKWNNRVVSNLLYYQTNYLVVAAMMISIVGFLSPFNMILGGIVVVLVFTGFVWAAHNKDVLRRMKKRYPTTFVMVVMLASYFLISMFGGVMVFVFGITFPLLLMFIHASLRLRNLKNKLENKMEGIGLKRTPMGIVLDALEQQEEGINRLTDYISKVKE</sequence>
<accession>O75915</accession>
<accession>B2R6V5</accession>
<accession>Q53ES3</accession>
<accession>Q5KU08</accession>
<proteinExistence type="evidence at protein level"/>
<dbReference type="EMBL" id="AB052638">
    <property type="protein sequence ID" value="BAD83603.1"/>
    <property type="molecule type" value="mRNA"/>
</dbReference>
<dbReference type="EMBL" id="AY102608">
    <property type="protein sequence ID" value="AAM28950.1"/>
    <property type="molecule type" value="mRNA"/>
</dbReference>
<dbReference type="EMBL" id="AB014765">
    <property type="protein sequence ID" value="BAC66462.1"/>
    <property type="molecule type" value="mRNA"/>
</dbReference>
<dbReference type="EMBL" id="AF070523">
    <property type="protein sequence ID" value="AAC64360.1"/>
    <property type="molecule type" value="mRNA"/>
</dbReference>
<dbReference type="EMBL" id="AF115965">
    <property type="protein sequence ID" value="AAP97237.1"/>
    <property type="molecule type" value="mRNA"/>
</dbReference>
<dbReference type="EMBL" id="AF125530">
    <property type="protein sequence ID" value="AAF17224.1"/>
    <property type="molecule type" value="mRNA"/>
</dbReference>
<dbReference type="EMBL" id="AF161476">
    <property type="protein sequence ID" value="AAF29091.1"/>
    <property type="molecule type" value="mRNA"/>
</dbReference>
<dbReference type="EMBL" id="AB097051">
    <property type="protein sequence ID" value="BAC77404.1"/>
    <property type="molecule type" value="mRNA"/>
</dbReference>
<dbReference type="EMBL" id="AK223566">
    <property type="protein sequence ID" value="BAD97286.1"/>
    <property type="status" value="ALT_INIT"/>
    <property type="molecule type" value="mRNA"/>
</dbReference>
<dbReference type="EMBL" id="AK312731">
    <property type="protein sequence ID" value="BAG35602.1"/>
    <property type="molecule type" value="mRNA"/>
</dbReference>
<dbReference type="EMBL" id="CH471055">
    <property type="protein sequence ID" value="EAW65473.1"/>
    <property type="molecule type" value="Genomic_DNA"/>
</dbReference>
<dbReference type="EMBL" id="BC005143">
    <property type="protein sequence ID" value="AAH05143.1"/>
    <property type="molecule type" value="mRNA"/>
</dbReference>
<dbReference type="EMBL" id="BC020797">
    <property type="protein sequence ID" value="AAH20797.1"/>
    <property type="molecule type" value="mRNA"/>
</dbReference>
<dbReference type="CCDS" id="CCDS2912.1"/>
<dbReference type="RefSeq" id="NP_006398.1">
    <property type="nucleotide sequence ID" value="NM_006407.4"/>
</dbReference>
<dbReference type="BioGRID" id="115801">
    <property type="interactions" value="214"/>
</dbReference>
<dbReference type="FunCoup" id="O75915">
    <property type="interactions" value="563"/>
</dbReference>
<dbReference type="IntAct" id="O75915">
    <property type="interactions" value="108"/>
</dbReference>
<dbReference type="MINT" id="O75915"/>
<dbReference type="STRING" id="9606.ENSP00000273258"/>
<dbReference type="TCDB" id="9.A.49.1.3">
    <property type="family name" value="the prenylated rab acceptor protein 1 (pra1) family"/>
</dbReference>
<dbReference type="GlyGen" id="O75915">
    <property type="glycosylation" value="1 site, 1 O-linked glycan (1 site)"/>
</dbReference>
<dbReference type="iPTMnet" id="O75915"/>
<dbReference type="MetOSite" id="O75915"/>
<dbReference type="PhosphoSitePlus" id="O75915"/>
<dbReference type="SwissPalm" id="O75915"/>
<dbReference type="BioMuta" id="ARL6IP5"/>
<dbReference type="CPTAC" id="CPTAC-1632"/>
<dbReference type="jPOST" id="O75915"/>
<dbReference type="MassIVE" id="O75915"/>
<dbReference type="PaxDb" id="9606-ENSP00000273258"/>
<dbReference type="PeptideAtlas" id="O75915"/>
<dbReference type="ProteomicsDB" id="50270"/>
<dbReference type="Pumba" id="O75915"/>
<dbReference type="TopDownProteomics" id="O75915"/>
<dbReference type="Antibodypedia" id="3088">
    <property type="antibodies" value="217 antibodies from 29 providers"/>
</dbReference>
<dbReference type="DNASU" id="10550"/>
<dbReference type="Ensembl" id="ENST00000273258.4">
    <property type="protein sequence ID" value="ENSP00000273258.3"/>
    <property type="gene ID" value="ENSG00000144746.7"/>
</dbReference>
<dbReference type="GeneID" id="10550"/>
<dbReference type="KEGG" id="hsa:10550"/>
<dbReference type="MANE-Select" id="ENST00000273258.4">
    <property type="protein sequence ID" value="ENSP00000273258.3"/>
    <property type="RefSeq nucleotide sequence ID" value="NM_006407.4"/>
    <property type="RefSeq protein sequence ID" value="NP_006398.1"/>
</dbReference>
<dbReference type="UCSC" id="uc003dnr.4">
    <property type="organism name" value="human"/>
</dbReference>
<dbReference type="AGR" id="HGNC:16937"/>
<dbReference type="CTD" id="10550"/>
<dbReference type="DisGeNET" id="10550"/>
<dbReference type="GeneCards" id="ARL6IP5"/>
<dbReference type="HGNC" id="HGNC:16937">
    <property type="gene designation" value="ARL6IP5"/>
</dbReference>
<dbReference type="HPA" id="ENSG00000144746">
    <property type="expression patterns" value="Low tissue specificity"/>
</dbReference>
<dbReference type="MIM" id="605709">
    <property type="type" value="gene"/>
</dbReference>
<dbReference type="neXtProt" id="NX_O75915"/>
<dbReference type="OpenTargets" id="ENSG00000144746"/>
<dbReference type="PharmGKB" id="PA134898937"/>
<dbReference type="VEuPathDB" id="HostDB:ENSG00000144746"/>
<dbReference type="eggNOG" id="KOG4050">
    <property type="taxonomic scope" value="Eukaryota"/>
</dbReference>
<dbReference type="GeneTree" id="ENSGT00390000008631"/>
<dbReference type="HOGENOM" id="CLU_097683_0_0_1"/>
<dbReference type="InParanoid" id="O75915"/>
<dbReference type="OMA" id="KPWDDFF"/>
<dbReference type="OrthoDB" id="18213at2759"/>
<dbReference type="PAN-GO" id="O75915">
    <property type="GO annotations" value="2 GO annotations based on evolutionary models"/>
</dbReference>
<dbReference type="PhylomeDB" id="O75915"/>
<dbReference type="TreeFam" id="TF105479"/>
<dbReference type="PathwayCommons" id="O75915"/>
<dbReference type="Reactome" id="R-HSA-210500">
    <property type="pathway name" value="Glutamate Neurotransmitter Release Cycle"/>
</dbReference>
<dbReference type="SignaLink" id="O75915"/>
<dbReference type="BioGRID-ORCS" id="10550">
    <property type="hits" value="12 hits in 1155 CRISPR screens"/>
</dbReference>
<dbReference type="ChiTaRS" id="ARL6IP5">
    <property type="organism name" value="human"/>
</dbReference>
<dbReference type="GeneWiki" id="ARL6IP5"/>
<dbReference type="GenomeRNAi" id="10550"/>
<dbReference type="Pharos" id="O75915">
    <property type="development level" value="Tbio"/>
</dbReference>
<dbReference type="PRO" id="PR:O75915"/>
<dbReference type="Proteomes" id="UP000005640">
    <property type="component" value="Chromosome 3"/>
</dbReference>
<dbReference type="RNAct" id="O75915">
    <property type="molecule type" value="protein"/>
</dbReference>
<dbReference type="Bgee" id="ENSG00000144746">
    <property type="expression patterns" value="Expressed in endothelial cell and 218 other cell types or tissues"/>
</dbReference>
<dbReference type="ExpressionAtlas" id="O75915">
    <property type="expression patterns" value="baseline and differential"/>
</dbReference>
<dbReference type="GO" id="GO:0005856">
    <property type="term" value="C:cytoskeleton"/>
    <property type="evidence" value="ECO:0007669"/>
    <property type="project" value="UniProtKB-SubCell"/>
</dbReference>
<dbReference type="GO" id="GO:0005789">
    <property type="term" value="C:endoplasmic reticulum membrane"/>
    <property type="evidence" value="ECO:0007669"/>
    <property type="project" value="UniProtKB-SubCell"/>
</dbReference>
<dbReference type="GO" id="GO:0016020">
    <property type="term" value="C:membrane"/>
    <property type="evidence" value="ECO:0007005"/>
    <property type="project" value="UniProtKB"/>
</dbReference>
<dbReference type="GO" id="GO:0005886">
    <property type="term" value="C:plasma membrane"/>
    <property type="evidence" value="ECO:0007669"/>
    <property type="project" value="UniProtKB-SubCell"/>
</dbReference>
<dbReference type="GO" id="GO:0099523">
    <property type="term" value="C:presynaptic cytosol"/>
    <property type="evidence" value="ECO:0007669"/>
    <property type="project" value="Ensembl"/>
</dbReference>
<dbReference type="GO" id="GO:0034599">
    <property type="term" value="P:cellular response to oxidative stress"/>
    <property type="evidence" value="ECO:0007669"/>
    <property type="project" value="Ensembl"/>
</dbReference>
<dbReference type="GO" id="GO:0006749">
    <property type="term" value="P:glutathione metabolic process"/>
    <property type="evidence" value="ECO:0007669"/>
    <property type="project" value="Ensembl"/>
</dbReference>
<dbReference type="GO" id="GO:0008631">
    <property type="term" value="P:intrinsic apoptotic signaling pathway in response to oxidative stress"/>
    <property type="evidence" value="ECO:0000314"/>
    <property type="project" value="UniProtKB"/>
</dbReference>
<dbReference type="GO" id="GO:0098712">
    <property type="term" value="P:L-glutamate import across plasma membrane"/>
    <property type="evidence" value="ECO:0007669"/>
    <property type="project" value="Ensembl"/>
</dbReference>
<dbReference type="GO" id="GO:0015813">
    <property type="term" value="P:L-glutamate transmembrane transport"/>
    <property type="evidence" value="ECO:0000250"/>
    <property type="project" value="UniProtKB"/>
</dbReference>
<dbReference type="GO" id="GO:0007611">
    <property type="term" value="P:learning or memory"/>
    <property type="evidence" value="ECO:0007669"/>
    <property type="project" value="Ensembl"/>
</dbReference>
<dbReference type="GO" id="GO:0002037">
    <property type="term" value="P:negative regulation of L-glutamate import across plasma membrane"/>
    <property type="evidence" value="ECO:0000250"/>
    <property type="project" value="UniProtKB"/>
</dbReference>
<dbReference type="GO" id="GO:0010917">
    <property type="term" value="P:negative regulation of mitochondrial membrane potential"/>
    <property type="evidence" value="ECO:0000315"/>
    <property type="project" value="UniProtKB"/>
</dbReference>
<dbReference type="GO" id="GO:0051051">
    <property type="term" value="P:negative regulation of transport"/>
    <property type="evidence" value="ECO:0000318"/>
    <property type="project" value="GO_Central"/>
</dbReference>
<dbReference type="GO" id="GO:0043065">
    <property type="term" value="P:positive regulation of apoptotic process"/>
    <property type="evidence" value="ECO:0000315"/>
    <property type="project" value="UniProtKB"/>
</dbReference>
<dbReference type="GO" id="GO:0032874">
    <property type="term" value="P:positive regulation of stress-activated MAPK cascade"/>
    <property type="evidence" value="ECO:0000315"/>
    <property type="project" value="UniProtKB"/>
</dbReference>
<dbReference type="GO" id="GO:0072659">
    <property type="term" value="P:protein localization to plasma membrane"/>
    <property type="evidence" value="ECO:0007669"/>
    <property type="project" value="Ensembl"/>
</dbReference>
<dbReference type="GO" id="GO:0015031">
    <property type="term" value="P:protein transport"/>
    <property type="evidence" value="ECO:0000314"/>
    <property type="project" value="MGI"/>
</dbReference>
<dbReference type="InterPro" id="IPR004895">
    <property type="entry name" value="Prenylated_rab_accept_PRA1"/>
</dbReference>
<dbReference type="PANTHER" id="PTHR12859:SF2">
    <property type="entry name" value="PRA1 FAMILY PROTEIN 3"/>
    <property type="match status" value="1"/>
</dbReference>
<dbReference type="PANTHER" id="PTHR12859">
    <property type="entry name" value="PRA1 PROTEIN"/>
    <property type="match status" value="1"/>
</dbReference>
<dbReference type="Pfam" id="PF03208">
    <property type="entry name" value="PRA1"/>
    <property type="match status" value="1"/>
</dbReference>
<organism>
    <name type="scientific">Homo sapiens</name>
    <name type="common">Human</name>
    <dbReference type="NCBI Taxonomy" id="9606"/>
    <lineage>
        <taxon>Eukaryota</taxon>
        <taxon>Metazoa</taxon>
        <taxon>Chordata</taxon>
        <taxon>Craniata</taxon>
        <taxon>Vertebrata</taxon>
        <taxon>Euteleostomi</taxon>
        <taxon>Mammalia</taxon>
        <taxon>Eutheria</taxon>
        <taxon>Euarchontoglires</taxon>
        <taxon>Primates</taxon>
        <taxon>Haplorrhini</taxon>
        <taxon>Catarrhini</taxon>
        <taxon>Hominidae</taxon>
        <taxon>Homo</taxon>
    </lineage>
</organism>
<gene>
    <name type="primary">ARL6IP5</name>
    <name type="synonym">DERP11</name>
    <name type="synonym">JWA</name>
    <name type="synonym">PRA2</name>
    <name type="synonym">PRAF3</name>
    <name type="ORF">HSPC127</name>
</gene>
<keyword id="KW-0007">Acetylation</keyword>
<keyword id="KW-1003">Cell membrane</keyword>
<keyword id="KW-0963">Cytoplasm</keyword>
<keyword id="KW-0206">Cytoskeleton</keyword>
<keyword id="KW-0903">Direct protein sequencing</keyword>
<keyword id="KW-0256">Endoplasmic reticulum</keyword>
<keyword id="KW-0472">Membrane</keyword>
<keyword id="KW-1267">Proteomics identification</keyword>
<keyword id="KW-1185">Reference proteome</keyword>
<keyword id="KW-0812">Transmembrane</keyword>
<keyword id="KW-1133">Transmembrane helix</keyword>
<evidence type="ECO:0000250" key="1"/>
<evidence type="ECO:0000250" key="2">
    <source>
        <dbReference type="UniProtKB" id="Q8R5J9"/>
    </source>
</evidence>
<evidence type="ECO:0000250" key="3">
    <source>
        <dbReference type="UniProtKB" id="Q9ES40"/>
    </source>
</evidence>
<evidence type="ECO:0000255" key="4"/>
<evidence type="ECO:0000269" key="5">
    <source>
    </source>
</evidence>
<evidence type="ECO:0000269" key="6">
    <source>
    </source>
</evidence>
<evidence type="ECO:0000269" key="7">
    <source ref="14"/>
</evidence>
<evidence type="ECO:0000305" key="8"/>
<evidence type="ECO:0007744" key="9">
    <source>
    </source>
</evidence>
<evidence type="ECO:0007744" key="10">
    <source>
    </source>
</evidence>
<name>PRAF3_HUMAN</name>
<comment type="function">
    <text evidence="2 3">Regulates intracellular concentrations of taurine and glutamate. Negatively modulates SLC1A1/EAAC1 glutamate transport activity by decreasing its affinity for glutamate in a PKC activity-dependent manner. Plays a role in the retention of SLC1A1/EAAC1 in the endoplasmic reticulum.</text>
</comment>
<comment type="subunit">
    <text evidence="2 3">Homodimer. Heterodimer with ARL6IP1. Forms multimers. Interacts with ARL6. Interacts with prenylated RAB1A and RAB3A. Interacts with SLC1A1/EAAC1. Interacts with RTN2 (via first transmembrane domain). Does not interact with VAMP1, VAMP2 or VAMP3.</text>
</comment>
<comment type="interaction">
    <interactant intactId="EBI-2860752">
        <id>O75915</id>
    </interactant>
    <interactant intactId="EBI-740987">
        <id>Q9NQG6</id>
        <label>MIEF1</label>
    </interactant>
    <organismsDiffer>false</organismsDiffer>
    <experiments>3</experiments>
</comment>
<comment type="interaction">
    <interactant intactId="EBI-2860752">
        <id>O75915</id>
    </interactant>
    <interactant intactId="EBI-2340249">
        <id>Q96GF1</id>
        <label>RNF185</label>
    </interactant>
    <organismsDiffer>false</organismsDiffer>
    <experiments>3</experiments>
</comment>
<comment type="subcellular location">
    <subcellularLocation>
        <location evidence="3">Endoplasmic reticulum membrane</location>
        <topology evidence="4">Multi-pass membrane protein</topology>
    </subcellularLocation>
    <subcellularLocation>
        <location evidence="3">Cell membrane</location>
        <topology evidence="4">Multi-pass membrane protein</topology>
    </subcellularLocation>
    <subcellularLocation>
        <location evidence="3">Cytoplasm</location>
    </subcellularLocation>
    <subcellularLocation>
        <location evidence="3">Cytoplasm</location>
        <location evidence="3">Cytoskeleton</location>
    </subcellularLocation>
    <text evidence="3">Also exists as a soluble form in the cytoplasm. Associated with microtubules.</text>
</comment>
<comment type="induction">
    <text evidence="1 6">By methyl-beta-cyclodextrin (By similarity). Up-regulated upon induced differentiation and in heat stress.</text>
</comment>
<comment type="similarity">
    <text evidence="8">Belongs to the PRA1 family.</text>
</comment>
<comment type="sequence caution" evidence="8">
    <conflict type="erroneous initiation">
        <sequence resource="EMBL-CDS" id="BAD97286"/>
    </conflict>
</comment>